<gene>
    <name type="primary">PPH21</name>
    <name type="ordered locus">YDL134C</name>
    <name type="ORF">D2180</name>
</gene>
<comment type="function">
    <text>Exact function not known, phosphatase 2A performs an essential cellular function.</text>
</comment>
<comment type="catalytic activity">
    <reaction>
        <text>O-phospho-L-seryl-[protein] + H2O = L-seryl-[protein] + phosphate</text>
        <dbReference type="Rhea" id="RHEA:20629"/>
        <dbReference type="Rhea" id="RHEA-COMP:9863"/>
        <dbReference type="Rhea" id="RHEA-COMP:11604"/>
        <dbReference type="ChEBI" id="CHEBI:15377"/>
        <dbReference type="ChEBI" id="CHEBI:29999"/>
        <dbReference type="ChEBI" id="CHEBI:43474"/>
        <dbReference type="ChEBI" id="CHEBI:83421"/>
        <dbReference type="EC" id="3.1.3.16"/>
    </reaction>
</comment>
<comment type="catalytic activity">
    <reaction>
        <text>O-phospho-L-threonyl-[protein] + H2O = L-threonyl-[protein] + phosphate</text>
        <dbReference type="Rhea" id="RHEA:47004"/>
        <dbReference type="Rhea" id="RHEA-COMP:11060"/>
        <dbReference type="Rhea" id="RHEA-COMP:11605"/>
        <dbReference type="ChEBI" id="CHEBI:15377"/>
        <dbReference type="ChEBI" id="CHEBI:30013"/>
        <dbReference type="ChEBI" id="CHEBI:43474"/>
        <dbReference type="ChEBI" id="CHEBI:61977"/>
        <dbReference type="EC" id="3.1.3.16"/>
    </reaction>
</comment>
<comment type="cofactor">
    <cofactor evidence="1">
        <name>Mn(2+)</name>
        <dbReference type="ChEBI" id="CHEBI:29035"/>
    </cofactor>
    <text evidence="1">Binds 2 manganese ions per subunit.</text>
</comment>
<comment type="subunit">
    <text evidence="5 7 8">Inactivated in a complex with phosphatase methylesterase PPE1 (PP2Ai). Interacts with phosphatase 2A activator RRD2, which can reactivate PP2Ai by dissociating the catalytic subunit from the complex. Forms a ternary complex with RRD2-TAP42.</text>
</comment>
<comment type="interaction">
    <interactant intactId="EBI-12745">
        <id>P23594</id>
    </interactant>
    <interactant intactId="EBI-13775">
        <id>P38796</id>
        <label>PPE1</label>
    </interactant>
    <organismsDiffer>false</organismsDiffer>
    <experiments>5</experiments>
</comment>
<comment type="interaction">
    <interactant intactId="EBI-12745">
        <id>P23594</id>
    </interactant>
    <interactant intactId="EBI-32784">
        <id>Q12461</id>
        <label>RRD2</label>
    </interactant>
    <organismsDiffer>false</organismsDiffer>
    <experiments>7</experiments>
</comment>
<comment type="interaction">
    <interactant intactId="EBI-12745">
        <id>P23594</id>
    </interactant>
    <interactant intactId="EBI-18926">
        <id>Q04372</id>
        <label>TAP42</label>
    </interactant>
    <organismsDiffer>false</organismsDiffer>
    <experiments>11</experiments>
</comment>
<comment type="PTM">
    <text evidence="3 4">Reversibly methyl esterified on Leu-369 by leucine carboxyl methyltransferase 1 (PPM1) and protein phosphatase methylesterase 1 (PPE1). Carboxyl methylation influences the affinity of the catalytic subunit for the different regulatory subunits, thereby modulating the PP2A holoenzyme's substrate specificity, enzyme activity and cellular localization.</text>
</comment>
<comment type="miscellaneous">
    <text evidence="6">Present with 5620 molecules/cell in log phase SD medium.</text>
</comment>
<comment type="similarity">
    <text evidence="9">Belongs to the PPP phosphatase family. PP-2A subfamily.</text>
</comment>
<proteinExistence type="evidence at protein level"/>
<accession>P23594</accession>
<accession>D6VRL4</accession>
<dbReference type="EC" id="3.1.3.16"/>
<dbReference type="EMBL" id="X56261">
    <property type="protein sequence ID" value="CAA39702.1"/>
    <property type="molecule type" value="Genomic_DNA"/>
</dbReference>
<dbReference type="EMBL" id="X58856">
    <property type="protein sequence ID" value="CAA41656.1"/>
    <property type="molecule type" value="Genomic_DNA"/>
</dbReference>
<dbReference type="EMBL" id="X96876">
    <property type="protein sequence ID" value="CAA65625.1"/>
    <property type="molecule type" value="Genomic_DNA"/>
</dbReference>
<dbReference type="EMBL" id="Z74182">
    <property type="protein sequence ID" value="CAA98707.1"/>
    <property type="molecule type" value="Genomic_DNA"/>
</dbReference>
<dbReference type="EMBL" id="BK006938">
    <property type="protein sequence ID" value="DAA11724.1"/>
    <property type="molecule type" value="Genomic_DNA"/>
</dbReference>
<dbReference type="PIR" id="A41525">
    <property type="entry name" value="PABY21"/>
</dbReference>
<dbReference type="RefSeq" id="NP_010147.1">
    <property type="nucleotide sequence ID" value="NM_001180193.1"/>
</dbReference>
<dbReference type="SMR" id="P23594"/>
<dbReference type="BioGRID" id="31927">
    <property type="interactions" value="256"/>
</dbReference>
<dbReference type="ComplexPortal" id="CPX-1380">
    <property type="entry name" value="TAP42-RRD2-PPH21 phosphatase complex"/>
</dbReference>
<dbReference type="ComplexPortal" id="CPX-1856">
    <property type="entry name" value="Serine/threonine-protein phosphatase PP2A variant 1"/>
</dbReference>
<dbReference type="ComplexPortal" id="CPX-1857">
    <property type="entry name" value="Serine/threonine-protein phosphatase PP2A variant 2"/>
</dbReference>
<dbReference type="DIP" id="DIP-2282N"/>
<dbReference type="FunCoup" id="P23594">
    <property type="interactions" value="1340"/>
</dbReference>
<dbReference type="IntAct" id="P23594">
    <property type="interactions" value="35"/>
</dbReference>
<dbReference type="MINT" id="P23594"/>
<dbReference type="STRING" id="4932.YDL134C"/>
<dbReference type="iPTMnet" id="P23594"/>
<dbReference type="PaxDb" id="4932-YDL134C"/>
<dbReference type="PeptideAtlas" id="P23594"/>
<dbReference type="EnsemblFungi" id="YDL134C_mRNA">
    <property type="protein sequence ID" value="YDL134C"/>
    <property type="gene ID" value="YDL134C"/>
</dbReference>
<dbReference type="GeneID" id="851421"/>
<dbReference type="KEGG" id="sce:YDL134C"/>
<dbReference type="AGR" id="SGD:S000002292"/>
<dbReference type="SGD" id="S000002292">
    <property type="gene designation" value="PPH21"/>
</dbReference>
<dbReference type="VEuPathDB" id="FungiDB:YDL134C"/>
<dbReference type="eggNOG" id="KOG0371">
    <property type="taxonomic scope" value="Eukaryota"/>
</dbReference>
<dbReference type="GeneTree" id="ENSGT00940000176641"/>
<dbReference type="HOGENOM" id="CLU_004962_8_1_1"/>
<dbReference type="InParanoid" id="P23594"/>
<dbReference type="OMA" id="MDDKTFT"/>
<dbReference type="OrthoDB" id="1930084at2759"/>
<dbReference type="BioCyc" id="YEAST:G3O-29532-MONOMER"/>
<dbReference type="Reactome" id="R-SCE-198753">
    <property type="pathway name" value="ERK/MAPK targets"/>
</dbReference>
<dbReference type="Reactome" id="R-SCE-202670">
    <property type="pathway name" value="ERKs are inactivated"/>
</dbReference>
<dbReference type="Reactome" id="R-SCE-389513">
    <property type="pathway name" value="Co-inhibition by CTLA4"/>
</dbReference>
<dbReference type="Reactome" id="R-SCE-6811558">
    <property type="pathway name" value="PI5P, PP2A and IER3 Regulate PI3K/AKT Signaling"/>
</dbReference>
<dbReference type="Reactome" id="R-SCE-69273">
    <property type="pathway name" value="Cyclin A/B1/B2 associated events during G2/M transition"/>
</dbReference>
<dbReference type="Reactome" id="R-SCE-975957">
    <property type="pathway name" value="Nonsense Mediated Decay (NMD) enhanced by the Exon Junction Complex (EJC)"/>
</dbReference>
<dbReference type="BioGRID-ORCS" id="851421">
    <property type="hits" value="0 hits in 10 CRISPR screens"/>
</dbReference>
<dbReference type="CD-CODE" id="E03F929F">
    <property type="entry name" value="Stress granule"/>
</dbReference>
<dbReference type="PRO" id="PR:P23594"/>
<dbReference type="Proteomes" id="UP000002311">
    <property type="component" value="Chromosome IV"/>
</dbReference>
<dbReference type="RNAct" id="P23594">
    <property type="molecule type" value="protein"/>
</dbReference>
<dbReference type="GO" id="GO:0005737">
    <property type="term" value="C:cytoplasm"/>
    <property type="evidence" value="ECO:0007005"/>
    <property type="project" value="SGD"/>
</dbReference>
<dbReference type="GO" id="GO:0010494">
    <property type="term" value="C:cytoplasmic stress granule"/>
    <property type="evidence" value="ECO:0007005"/>
    <property type="project" value="SGD"/>
</dbReference>
<dbReference type="GO" id="GO:0005829">
    <property type="term" value="C:cytosol"/>
    <property type="evidence" value="ECO:0000318"/>
    <property type="project" value="GO_Central"/>
</dbReference>
<dbReference type="GO" id="GO:0005634">
    <property type="term" value="C:nucleus"/>
    <property type="evidence" value="ECO:0007005"/>
    <property type="project" value="SGD"/>
</dbReference>
<dbReference type="GO" id="GO:0000159">
    <property type="term" value="C:protein phosphatase type 2A complex"/>
    <property type="evidence" value="ECO:0000314"/>
    <property type="project" value="SGD"/>
</dbReference>
<dbReference type="GO" id="GO:0046872">
    <property type="term" value="F:metal ion binding"/>
    <property type="evidence" value="ECO:0007669"/>
    <property type="project" value="UniProtKB-KW"/>
</dbReference>
<dbReference type="GO" id="GO:0004722">
    <property type="term" value="F:protein serine/threonine phosphatase activity"/>
    <property type="evidence" value="ECO:0000315"/>
    <property type="project" value="SGD"/>
</dbReference>
<dbReference type="GO" id="GO:0000082">
    <property type="term" value="P:G1/S transition of mitotic cell cycle"/>
    <property type="evidence" value="ECO:0000316"/>
    <property type="project" value="SGD"/>
</dbReference>
<dbReference type="GO" id="GO:0000278">
    <property type="term" value="P:mitotic cell cycle"/>
    <property type="evidence" value="ECO:0000318"/>
    <property type="project" value="GO_Central"/>
</dbReference>
<dbReference type="GO" id="GO:2000786">
    <property type="term" value="P:positive regulation of autophagosome assembly"/>
    <property type="evidence" value="ECO:0000316"/>
    <property type="project" value="SGD"/>
</dbReference>
<dbReference type="GO" id="GO:1903432">
    <property type="term" value="P:regulation of TORC1 signaling"/>
    <property type="evidence" value="ECO:0000316"/>
    <property type="project" value="SGD"/>
</dbReference>
<dbReference type="GO" id="GO:0006417">
    <property type="term" value="P:regulation of translation"/>
    <property type="evidence" value="ECO:0000353"/>
    <property type="project" value="SGD"/>
</dbReference>
<dbReference type="GO" id="GO:0031929">
    <property type="term" value="P:TOR signaling"/>
    <property type="evidence" value="ECO:0000303"/>
    <property type="project" value="ComplexPortal"/>
</dbReference>
<dbReference type="CDD" id="cd07415">
    <property type="entry name" value="MPP_PP2A_PP4_PP6"/>
    <property type="match status" value="1"/>
</dbReference>
<dbReference type="FunFam" id="3.60.21.10:FF:000003">
    <property type="entry name" value="Serine/threonine-protein phosphatase"/>
    <property type="match status" value="1"/>
</dbReference>
<dbReference type="Gene3D" id="3.60.21.10">
    <property type="match status" value="1"/>
</dbReference>
<dbReference type="InterPro" id="IPR004843">
    <property type="entry name" value="Calcineurin-like_PHP_ApaH"/>
</dbReference>
<dbReference type="InterPro" id="IPR029052">
    <property type="entry name" value="Metallo-depent_PP-like"/>
</dbReference>
<dbReference type="InterPro" id="IPR047129">
    <property type="entry name" value="PPA2-like"/>
</dbReference>
<dbReference type="InterPro" id="IPR006186">
    <property type="entry name" value="Ser/Thr-sp_prot-phosphatase"/>
</dbReference>
<dbReference type="PANTHER" id="PTHR45619">
    <property type="entry name" value="SERINE/THREONINE-PROTEIN PHOSPHATASE PP2A-RELATED"/>
    <property type="match status" value="1"/>
</dbReference>
<dbReference type="Pfam" id="PF00149">
    <property type="entry name" value="Metallophos"/>
    <property type="match status" value="1"/>
</dbReference>
<dbReference type="PIRSF" id="PIRSF033096">
    <property type="entry name" value="PPPtase_5"/>
    <property type="match status" value="1"/>
</dbReference>
<dbReference type="PRINTS" id="PR00114">
    <property type="entry name" value="STPHPHTASE"/>
</dbReference>
<dbReference type="SMART" id="SM00156">
    <property type="entry name" value="PP2Ac"/>
    <property type="match status" value="1"/>
</dbReference>
<dbReference type="SUPFAM" id="SSF56300">
    <property type="entry name" value="Metallo-dependent phosphatases"/>
    <property type="match status" value="1"/>
</dbReference>
<dbReference type="PROSITE" id="PS00125">
    <property type="entry name" value="SER_THR_PHOSPHATASE"/>
    <property type="match status" value="1"/>
</dbReference>
<organism>
    <name type="scientific">Saccharomyces cerevisiae (strain ATCC 204508 / S288c)</name>
    <name type="common">Baker's yeast</name>
    <dbReference type="NCBI Taxonomy" id="559292"/>
    <lineage>
        <taxon>Eukaryota</taxon>
        <taxon>Fungi</taxon>
        <taxon>Dikarya</taxon>
        <taxon>Ascomycota</taxon>
        <taxon>Saccharomycotina</taxon>
        <taxon>Saccharomycetes</taxon>
        <taxon>Saccharomycetales</taxon>
        <taxon>Saccharomycetaceae</taxon>
        <taxon>Saccharomyces</taxon>
    </lineage>
</organism>
<name>PP2A1_YEAST</name>
<keyword id="KW-0378">Hydrolase</keyword>
<keyword id="KW-0464">Manganese</keyword>
<keyword id="KW-0479">Metal-binding</keyword>
<keyword id="KW-0488">Methylation</keyword>
<keyword id="KW-0904">Protein phosphatase</keyword>
<keyword id="KW-1185">Reference proteome</keyword>
<feature type="chain" id="PRO_0000058873" description="Serine/threonine-protein phosphatase PP2A-1 catalytic subunit">
    <location>
        <begin position="1"/>
        <end position="369"/>
    </location>
</feature>
<feature type="region of interest" description="Disordered" evidence="2">
    <location>
        <begin position="1"/>
        <end position="57"/>
    </location>
</feature>
<feature type="region of interest" description="Disordered" evidence="2">
    <location>
        <begin position="348"/>
        <end position="369"/>
    </location>
</feature>
<feature type="active site" description="Proton donor" evidence="1">
    <location>
        <position position="178"/>
    </location>
</feature>
<feature type="binding site" evidence="1">
    <location>
        <position position="117"/>
    </location>
    <ligand>
        <name>Mn(2+)</name>
        <dbReference type="ChEBI" id="CHEBI:29035"/>
        <label>1</label>
    </ligand>
</feature>
<feature type="binding site" evidence="1">
    <location>
        <position position="119"/>
    </location>
    <ligand>
        <name>Mn(2+)</name>
        <dbReference type="ChEBI" id="CHEBI:29035"/>
        <label>1</label>
    </ligand>
</feature>
<feature type="binding site" evidence="1">
    <location>
        <position position="145"/>
    </location>
    <ligand>
        <name>Mn(2+)</name>
        <dbReference type="ChEBI" id="CHEBI:29035"/>
        <label>1</label>
    </ligand>
</feature>
<feature type="binding site" evidence="1">
    <location>
        <position position="145"/>
    </location>
    <ligand>
        <name>Mn(2+)</name>
        <dbReference type="ChEBI" id="CHEBI:29035"/>
        <label>2</label>
    </ligand>
</feature>
<feature type="binding site" evidence="1">
    <location>
        <position position="177"/>
    </location>
    <ligand>
        <name>Mn(2+)</name>
        <dbReference type="ChEBI" id="CHEBI:29035"/>
        <label>2</label>
    </ligand>
</feature>
<feature type="binding site" evidence="1">
    <location>
        <position position="227"/>
    </location>
    <ligand>
        <name>Mn(2+)</name>
        <dbReference type="ChEBI" id="CHEBI:29035"/>
        <label>2</label>
    </ligand>
</feature>
<feature type="binding site" evidence="1">
    <location>
        <position position="301"/>
    </location>
    <ligand>
        <name>Mn(2+)</name>
        <dbReference type="ChEBI" id="CHEBI:29035"/>
        <label>2</label>
    </ligand>
</feature>
<feature type="modified residue" description="Leucine methyl ester" evidence="3">
    <location>
        <position position="369"/>
    </location>
</feature>
<feature type="mutagenesis site" description="Reduced interaction with TAP42." evidence="5">
    <original>L</original>
    <variation>A</variation>
    <location>
        <position position="99"/>
    </location>
</feature>
<feature type="mutagenesis site" description="Reduced interaction with TAP42." evidence="5">
    <original>E</original>
    <variation>A</variation>
    <location>
        <position position="102"/>
    </location>
</feature>
<feature type="mutagenesis site" description="Reduced interaction with TAP42." evidence="5">
    <original>E</original>
    <variation>A</variation>
    <location>
        <position position="103"/>
    </location>
</feature>
<evidence type="ECO:0000250" key="1"/>
<evidence type="ECO:0000256" key="2">
    <source>
        <dbReference type="SAM" id="MobiDB-lite"/>
    </source>
</evidence>
<evidence type="ECO:0000269" key="3">
    <source>
    </source>
</evidence>
<evidence type="ECO:0000269" key="4">
    <source>
    </source>
</evidence>
<evidence type="ECO:0000269" key="5">
    <source>
    </source>
</evidence>
<evidence type="ECO:0000269" key="6">
    <source>
    </source>
</evidence>
<evidence type="ECO:0000269" key="7">
    <source>
    </source>
</evidence>
<evidence type="ECO:0000269" key="8">
    <source>
    </source>
</evidence>
<evidence type="ECO:0000305" key="9"/>
<protein>
    <recommendedName>
        <fullName>Serine/threonine-protein phosphatase PP2A-1 catalytic subunit</fullName>
        <ecNumber>3.1.3.16</ecNumber>
    </recommendedName>
</protein>
<sequence length="369" mass="41938">MDTDLDVPMQDAVTEQLTPTVSEDMDLNNNSSDNNAEEFSVDDLKPGSSGIADHKSSKPLELNNTNINQLDQWIEHLSKCEPLSEDDVARLCKMAVDVLQFEENVKPINVPVTICGDVHGQFHDLLELFKIGGPCPDTNYLFMGDYVDRGYYSVETVSYLVAMKVRYPHRITILRGNHESRQITQVYGFYDECLRKYGSANVWKMFTDLFDYFPITALVDNKIFCLHGGLSPMIETIDQVRELNRIQEVPHEGPMCDLLWSDPDDRGGWGISPRGAGFTFGQDVSEQFNHTNDLSLIARAHQLVMEGYAWSHQQNVVTIFSAPNYCYRCGNQAAIMEVDENHNRQFLQYDPSVRPGEPSVSRKTPDYFL</sequence>
<reference key="1">
    <citation type="journal article" date="1990" name="EMBO J.">
        <title>Saccharomyces cerevisiae protein phosphatase 2A performs an essential cellular function and is encoded by two genes.</title>
        <authorList>
            <person name="Sneddon A.A."/>
            <person name="Cohen P.T.W."/>
            <person name="Stark M.J.R."/>
        </authorList>
    </citation>
    <scope>NUCLEOTIDE SEQUENCE [GENOMIC DNA]</scope>
    <source>
        <strain>LL20</strain>
    </source>
</reference>
<reference key="2">
    <citation type="journal article" date="1991" name="Mol. Cell. Biol.">
        <title>Protein phosphatase 2A in Saccharomyces cerevisiae: effects on cell growth and bud morphogenesis.</title>
        <authorList>
            <person name="Ronne H."/>
            <person name="Carlberg M."/>
            <person name="Hu G.-Z."/>
            <person name="Nehlin J.O."/>
        </authorList>
    </citation>
    <scope>NUCLEOTIDE SEQUENCE [GENOMIC DNA]</scope>
    <source>
        <strain>ATCC 208353 / W303-1A</strain>
    </source>
</reference>
<reference key="3">
    <citation type="journal article" date="1996" name="Yeast">
        <title>Analysis of a 26,756 bp segment from the left arm of yeast chromosome IV.</title>
        <authorList>
            <person name="Woelfl S."/>
            <person name="Haneman V."/>
            <person name="Saluz H.P."/>
        </authorList>
    </citation>
    <scope>NUCLEOTIDE SEQUENCE [GENOMIC DNA]</scope>
    <source>
        <strain>ATCC 96604 / S288c / FY1679</strain>
    </source>
</reference>
<reference key="4">
    <citation type="journal article" date="1997" name="Nature">
        <title>The nucleotide sequence of Saccharomyces cerevisiae chromosome IV.</title>
        <authorList>
            <person name="Jacq C."/>
            <person name="Alt-Moerbe J."/>
            <person name="Andre B."/>
            <person name="Arnold W."/>
            <person name="Bahr A."/>
            <person name="Ballesta J.P.G."/>
            <person name="Bargues M."/>
            <person name="Baron L."/>
            <person name="Becker A."/>
            <person name="Biteau N."/>
            <person name="Bloecker H."/>
            <person name="Blugeon C."/>
            <person name="Boskovic J."/>
            <person name="Brandt P."/>
            <person name="Brueckner M."/>
            <person name="Buitrago M.J."/>
            <person name="Coster F."/>
            <person name="Delaveau T."/>
            <person name="del Rey F."/>
            <person name="Dujon B."/>
            <person name="Eide L.G."/>
            <person name="Garcia-Cantalejo J.M."/>
            <person name="Goffeau A."/>
            <person name="Gomez-Peris A."/>
            <person name="Granotier C."/>
            <person name="Hanemann V."/>
            <person name="Hankeln T."/>
            <person name="Hoheisel J.D."/>
            <person name="Jaeger W."/>
            <person name="Jimenez A."/>
            <person name="Jonniaux J.-L."/>
            <person name="Kraemer C."/>
            <person name="Kuester H."/>
            <person name="Laamanen P."/>
            <person name="Legros Y."/>
            <person name="Louis E.J."/>
            <person name="Moeller-Rieker S."/>
            <person name="Monnet A."/>
            <person name="Moro M."/>
            <person name="Mueller-Auer S."/>
            <person name="Nussbaumer B."/>
            <person name="Paricio N."/>
            <person name="Paulin L."/>
            <person name="Perea J."/>
            <person name="Perez-Alonso M."/>
            <person name="Perez-Ortin J.E."/>
            <person name="Pohl T.M."/>
            <person name="Prydz H."/>
            <person name="Purnelle B."/>
            <person name="Rasmussen S.W."/>
            <person name="Remacha M.A."/>
            <person name="Revuelta J.L."/>
            <person name="Rieger M."/>
            <person name="Salom D."/>
            <person name="Saluz H.P."/>
            <person name="Saiz J.E."/>
            <person name="Saren A.-M."/>
            <person name="Schaefer M."/>
            <person name="Scharfe M."/>
            <person name="Schmidt E.R."/>
            <person name="Schneider C."/>
            <person name="Scholler P."/>
            <person name="Schwarz S."/>
            <person name="Soler-Mira A."/>
            <person name="Urrestarazu L.A."/>
            <person name="Verhasselt P."/>
            <person name="Vissers S."/>
            <person name="Voet M."/>
            <person name="Volckaert G."/>
            <person name="Wagner G."/>
            <person name="Wambutt R."/>
            <person name="Wedler E."/>
            <person name="Wedler H."/>
            <person name="Woelfl S."/>
            <person name="Harris D.E."/>
            <person name="Bowman S."/>
            <person name="Brown D."/>
            <person name="Churcher C.M."/>
            <person name="Connor R."/>
            <person name="Dedman K."/>
            <person name="Gentles S."/>
            <person name="Hamlin N."/>
            <person name="Hunt S."/>
            <person name="Jones L."/>
            <person name="McDonald S."/>
            <person name="Murphy L.D."/>
            <person name="Niblett D."/>
            <person name="Odell C."/>
            <person name="Oliver K."/>
            <person name="Rajandream M.A."/>
            <person name="Richards C."/>
            <person name="Shore L."/>
            <person name="Walsh S.V."/>
            <person name="Barrell B.G."/>
            <person name="Dietrich F.S."/>
            <person name="Mulligan J.T."/>
            <person name="Allen E."/>
            <person name="Araujo R."/>
            <person name="Aviles E."/>
            <person name="Berno A."/>
            <person name="Carpenter J."/>
            <person name="Chen E."/>
            <person name="Cherry J.M."/>
            <person name="Chung E."/>
            <person name="Duncan M."/>
            <person name="Hunicke-Smith S."/>
            <person name="Hyman R.W."/>
            <person name="Komp C."/>
            <person name="Lashkari D."/>
            <person name="Lew H."/>
            <person name="Lin D."/>
            <person name="Mosedale D."/>
            <person name="Nakahara K."/>
            <person name="Namath A."/>
            <person name="Oefner P."/>
            <person name="Oh C."/>
            <person name="Petel F.X."/>
            <person name="Roberts D."/>
            <person name="Schramm S."/>
            <person name="Schroeder M."/>
            <person name="Shogren T."/>
            <person name="Shroff N."/>
            <person name="Winant A."/>
            <person name="Yelton M.A."/>
            <person name="Botstein D."/>
            <person name="Davis R.W."/>
            <person name="Johnston M."/>
            <person name="Andrews S."/>
            <person name="Brinkman R."/>
            <person name="Cooper J."/>
            <person name="Ding H."/>
            <person name="Du Z."/>
            <person name="Favello A."/>
            <person name="Fulton L."/>
            <person name="Gattung S."/>
            <person name="Greco T."/>
            <person name="Hallsworth K."/>
            <person name="Hawkins J."/>
            <person name="Hillier L.W."/>
            <person name="Jier M."/>
            <person name="Johnson D."/>
            <person name="Johnston L."/>
            <person name="Kirsten J."/>
            <person name="Kucaba T."/>
            <person name="Langston Y."/>
            <person name="Latreille P."/>
            <person name="Le T."/>
            <person name="Mardis E."/>
            <person name="Menezes S."/>
            <person name="Miller N."/>
            <person name="Nhan M."/>
            <person name="Pauley A."/>
            <person name="Peluso D."/>
            <person name="Rifkin L."/>
            <person name="Riles L."/>
            <person name="Taich A."/>
            <person name="Trevaskis E."/>
            <person name="Vignati D."/>
            <person name="Wilcox L."/>
            <person name="Wohldman P."/>
            <person name="Vaudin M."/>
            <person name="Wilson R."/>
            <person name="Waterston R."/>
            <person name="Albermann K."/>
            <person name="Hani J."/>
            <person name="Heumann K."/>
            <person name="Kleine K."/>
            <person name="Mewes H.-W."/>
            <person name="Zollner A."/>
            <person name="Zaccaria P."/>
        </authorList>
    </citation>
    <scope>NUCLEOTIDE SEQUENCE [LARGE SCALE GENOMIC DNA]</scope>
    <source>
        <strain>ATCC 204508 / S288c</strain>
    </source>
</reference>
<reference key="5">
    <citation type="journal article" date="2014" name="G3 (Bethesda)">
        <title>The reference genome sequence of Saccharomyces cerevisiae: Then and now.</title>
        <authorList>
            <person name="Engel S.R."/>
            <person name="Dietrich F.S."/>
            <person name="Fisk D.G."/>
            <person name="Binkley G."/>
            <person name="Balakrishnan R."/>
            <person name="Costanzo M.C."/>
            <person name="Dwight S.S."/>
            <person name="Hitz B.C."/>
            <person name="Karra K."/>
            <person name="Nash R.S."/>
            <person name="Weng S."/>
            <person name="Wong E.D."/>
            <person name="Lloyd P."/>
            <person name="Skrzypek M.S."/>
            <person name="Miyasato S.R."/>
            <person name="Simison M."/>
            <person name="Cherry J.M."/>
        </authorList>
    </citation>
    <scope>GENOME REANNOTATION</scope>
    <source>
        <strain>ATCC 204508 / S288c</strain>
    </source>
</reference>
<reference key="6">
    <citation type="journal article" date="2000" name="EMBO J.">
        <title>Carboxyl methylation of the phosphoprotein phosphatase 2A catalytic subunit promotes its functional association with regulatory subunits in vivo.</title>
        <authorList>
            <person name="Wu J."/>
            <person name="Tolstykh T."/>
            <person name="Lee J."/>
            <person name="Boyd K."/>
            <person name="Stock J.B."/>
            <person name="Broach J.R."/>
        </authorList>
    </citation>
    <scope>METHYLATION AT LEU-369 BY PPM1</scope>
    <scope>DEMETHYLATION AT LEU-369 BY PPE1</scope>
</reference>
<reference key="7">
    <citation type="journal article" date="2001" name="Arch. Biochem. Biophys.">
        <title>Protein phosphatase methyltransferase 1 (Ppm1p) is the sole activity responsible for modification of the major forms of protein phosphatase 2A in yeast.</title>
        <authorList>
            <person name="Kalhor H.R."/>
            <person name="Luk K."/>
            <person name="Ramos A."/>
            <person name="Zobel-Thropp P."/>
            <person name="Clarke S."/>
        </authorList>
    </citation>
    <scope>METHYLATION BY PPM1</scope>
</reference>
<reference key="8">
    <citation type="journal article" date="2003" name="Mol. Biol. Cell">
        <title>Interaction with Tap42 is required for the essential function of Sit4 and type 2A phosphatases.</title>
        <authorList>
            <person name="Wang H."/>
            <person name="Wang X."/>
            <person name="Jiang Y."/>
        </authorList>
    </citation>
    <scope>INTERACTION WITH TAP42</scope>
    <scope>MUTAGENESIS OF LEU-99; GLU-102 AND GLU-103</scope>
</reference>
<reference key="9">
    <citation type="journal article" date="2003" name="Nature">
        <title>Global analysis of protein expression in yeast.</title>
        <authorList>
            <person name="Ghaemmaghami S."/>
            <person name="Huh W.-K."/>
            <person name="Bower K."/>
            <person name="Howson R.W."/>
            <person name="Belle A."/>
            <person name="Dephoure N."/>
            <person name="O'Shea E.K."/>
            <person name="Weissman J.S."/>
        </authorList>
    </citation>
    <scope>LEVEL OF PROTEIN EXPRESSION [LARGE SCALE ANALYSIS]</scope>
</reference>
<reference key="10">
    <citation type="journal article" date="2005" name="Biochem. J.">
        <title>Specific interactions of PP2A and PP2A-like phosphatases with the yeast PTPA homologues, Ypa1 and Ypa2.</title>
        <authorList>
            <person name="Van Hoof C."/>
            <person name="Martens E."/>
            <person name="Longin S."/>
            <person name="Jordens J."/>
            <person name="Stevens I."/>
            <person name="Janssens V."/>
            <person name="Goris J."/>
        </authorList>
    </citation>
    <scope>INTERACTION WITH PPE1 AND RRD2</scope>
</reference>
<reference key="11">
    <citation type="journal article" date="2005" name="Mol. Biol. Cell">
        <title>The yeast phosphotyrosyl phosphatase activator is part of the Tap42-phosphatase complexes.</title>
        <authorList>
            <person name="Zheng Y."/>
            <person name="Jiang Y."/>
        </authorList>
    </citation>
    <scope>INTERACTION WITH RRD2 AND TAP42</scope>
</reference>